<reference key="1">
    <citation type="submission" date="2007-07" db="EMBL/GenBank/DDBJ databases">
        <title>Complete genome sequence of Campylobacter jejuni subsp doylei 269.97 isolated from human blood.</title>
        <authorList>
            <person name="Fouts D.E."/>
            <person name="Mongodin E.F."/>
            <person name="Puiu D."/>
            <person name="Sebastian Y."/>
            <person name="Miller W.G."/>
            <person name="Mandrell R.E."/>
            <person name="Lastovica A.J."/>
            <person name="Nelson K.E."/>
        </authorList>
    </citation>
    <scope>NUCLEOTIDE SEQUENCE [LARGE SCALE GENOMIC DNA]</scope>
    <source>
        <strain>ATCC BAA-1458 / RM4099 / 269.97</strain>
    </source>
</reference>
<protein>
    <recommendedName>
        <fullName evidence="1">Glutamate-1-semialdehyde 2,1-aminomutase</fullName>
        <shortName evidence="1">GSA</shortName>
        <ecNumber evidence="1">5.4.3.8</ecNumber>
    </recommendedName>
    <alternativeName>
        <fullName evidence="1">Glutamate-1-semialdehyde aminotransferase</fullName>
        <shortName evidence="1">GSA-AT</shortName>
    </alternativeName>
</protein>
<comment type="catalytic activity">
    <reaction evidence="1">
        <text>(S)-4-amino-5-oxopentanoate = 5-aminolevulinate</text>
        <dbReference type="Rhea" id="RHEA:14265"/>
        <dbReference type="ChEBI" id="CHEBI:57501"/>
        <dbReference type="ChEBI" id="CHEBI:356416"/>
        <dbReference type="EC" id="5.4.3.8"/>
    </reaction>
</comment>
<comment type="cofactor">
    <cofactor evidence="1">
        <name>pyridoxal 5'-phosphate</name>
        <dbReference type="ChEBI" id="CHEBI:597326"/>
    </cofactor>
</comment>
<comment type="pathway">
    <text evidence="1">Porphyrin-containing compound metabolism; protoporphyrin-IX biosynthesis; 5-aminolevulinate from L-glutamyl-tRNA(Glu): step 2/2.</text>
</comment>
<comment type="subunit">
    <text evidence="1">Homodimer.</text>
</comment>
<comment type="subcellular location">
    <subcellularLocation>
        <location evidence="1">Cytoplasm</location>
    </subcellularLocation>
</comment>
<comment type="similarity">
    <text evidence="1">Belongs to the class-III pyridoxal-phosphate-dependent aminotransferase family. HemL subfamily.</text>
</comment>
<dbReference type="EC" id="5.4.3.8" evidence="1"/>
<dbReference type="EMBL" id="CP000768">
    <property type="protein sequence ID" value="ABS44820.1"/>
    <property type="molecule type" value="Genomic_DNA"/>
</dbReference>
<dbReference type="SMR" id="A7H3N1"/>
<dbReference type="KEGG" id="cjd:JJD26997_1002"/>
<dbReference type="HOGENOM" id="CLU_016922_1_5_7"/>
<dbReference type="UniPathway" id="UPA00251">
    <property type="reaction ID" value="UER00317"/>
</dbReference>
<dbReference type="Proteomes" id="UP000002302">
    <property type="component" value="Chromosome"/>
</dbReference>
<dbReference type="GO" id="GO:0005737">
    <property type="term" value="C:cytoplasm"/>
    <property type="evidence" value="ECO:0007669"/>
    <property type="project" value="UniProtKB-SubCell"/>
</dbReference>
<dbReference type="GO" id="GO:0042286">
    <property type="term" value="F:glutamate-1-semialdehyde 2,1-aminomutase activity"/>
    <property type="evidence" value="ECO:0007669"/>
    <property type="project" value="UniProtKB-UniRule"/>
</dbReference>
<dbReference type="GO" id="GO:0030170">
    <property type="term" value="F:pyridoxal phosphate binding"/>
    <property type="evidence" value="ECO:0007669"/>
    <property type="project" value="InterPro"/>
</dbReference>
<dbReference type="GO" id="GO:0008483">
    <property type="term" value="F:transaminase activity"/>
    <property type="evidence" value="ECO:0007669"/>
    <property type="project" value="InterPro"/>
</dbReference>
<dbReference type="GO" id="GO:0006782">
    <property type="term" value="P:protoporphyrinogen IX biosynthetic process"/>
    <property type="evidence" value="ECO:0007669"/>
    <property type="project" value="UniProtKB-UniRule"/>
</dbReference>
<dbReference type="CDD" id="cd00610">
    <property type="entry name" value="OAT_like"/>
    <property type="match status" value="1"/>
</dbReference>
<dbReference type="FunFam" id="3.40.640.10:FF:000021">
    <property type="entry name" value="Glutamate-1-semialdehyde 2,1-aminomutase"/>
    <property type="match status" value="1"/>
</dbReference>
<dbReference type="Gene3D" id="3.90.1150.10">
    <property type="entry name" value="Aspartate Aminotransferase, domain 1"/>
    <property type="match status" value="1"/>
</dbReference>
<dbReference type="Gene3D" id="3.40.640.10">
    <property type="entry name" value="Type I PLP-dependent aspartate aminotransferase-like (Major domain)"/>
    <property type="match status" value="1"/>
</dbReference>
<dbReference type="HAMAP" id="MF_00375">
    <property type="entry name" value="HemL_aminotrans_3"/>
    <property type="match status" value="1"/>
</dbReference>
<dbReference type="InterPro" id="IPR004639">
    <property type="entry name" value="4pyrrol_synth_GluAld_NH2Trfase"/>
</dbReference>
<dbReference type="InterPro" id="IPR005814">
    <property type="entry name" value="Aminotrans_3"/>
</dbReference>
<dbReference type="InterPro" id="IPR049704">
    <property type="entry name" value="Aminotrans_3_PPA_site"/>
</dbReference>
<dbReference type="InterPro" id="IPR015424">
    <property type="entry name" value="PyrdxlP-dep_Trfase"/>
</dbReference>
<dbReference type="InterPro" id="IPR015421">
    <property type="entry name" value="PyrdxlP-dep_Trfase_major"/>
</dbReference>
<dbReference type="InterPro" id="IPR015422">
    <property type="entry name" value="PyrdxlP-dep_Trfase_small"/>
</dbReference>
<dbReference type="NCBIfam" id="TIGR00713">
    <property type="entry name" value="hemL"/>
    <property type="match status" value="1"/>
</dbReference>
<dbReference type="NCBIfam" id="NF000818">
    <property type="entry name" value="PRK00062.1"/>
    <property type="match status" value="1"/>
</dbReference>
<dbReference type="PANTHER" id="PTHR43713">
    <property type="entry name" value="GLUTAMATE-1-SEMIALDEHYDE 2,1-AMINOMUTASE"/>
    <property type="match status" value="1"/>
</dbReference>
<dbReference type="PANTHER" id="PTHR43713:SF3">
    <property type="entry name" value="GLUTAMATE-1-SEMIALDEHYDE 2,1-AMINOMUTASE 1, CHLOROPLASTIC-RELATED"/>
    <property type="match status" value="1"/>
</dbReference>
<dbReference type="Pfam" id="PF00202">
    <property type="entry name" value="Aminotran_3"/>
    <property type="match status" value="1"/>
</dbReference>
<dbReference type="SUPFAM" id="SSF53383">
    <property type="entry name" value="PLP-dependent transferases"/>
    <property type="match status" value="1"/>
</dbReference>
<dbReference type="PROSITE" id="PS00600">
    <property type="entry name" value="AA_TRANSFER_CLASS_3"/>
    <property type="match status" value="1"/>
</dbReference>
<feature type="chain" id="PRO_1000059982" description="Glutamate-1-semialdehyde 2,1-aminomutase">
    <location>
        <begin position="1"/>
        <end position="424"/>
    </location>
</feature>
<feature type="modified residue" description="N6-(pyridoxal phosphate)lysine" evidence="1">
    <location>
        <position position="263"/>
    </location>
</feature>
<name>GSA_CAMJD</name>
<gene>
    <name evidence="1" type="primary">hemL</name>
    <name type="ordered locus">JJD26997_1002</name>
</gene>
<organism>
    <name type="scientific">Campylobacter jejuni subsp. doylei (strain ATCC BAA-1458 / RM4099 / 269.97)</name>
    <dbReference type="NCBI Taxonomy" id="360109"/>
    <lineage>
        <taxon>Bacteria</taxon>
        <taxon>Pseudomonadati</taxon>
        <taxon>Campylobacterota</taxon>
        <taxon>Epsilonproteobacteria</taxon>
        <taxon>Campylobacterales</taxon>
        <taxon>Campylobacteraceae</taxon>
        <taxon>Campylobacter</taxon>
    </lineage>
</organism>
<sequence>MTNKKAFKEACKFIAGGVNSPVRAFANVQSEPKFISHGKGAYIFDIDGNSYIDYVQSWGPLLFGHCDKDIQKACQKALHKGSSFGAPTLLETELAKLVLSDFPHLEKIRFVSSGTEATMSAIRLARGFTKKDKILKFEGCYHGHSDSLLVSAGSGAATFNSPSSLGVLEDVAKHTLVAKYNDINSVKELFEKNKDIACVIIEPIAGNMGLVPAKQDFLEELAKICKNNQTLLIFDEVMSGYRASYLGSYGINHIQADIITFGKVIGGGLPAAAFASRAEIMDILSPLGGVYQAGTLSGNPLAMAAGIASLTKAKKKTKLYDKLGTLAKKLTQGMKKLADEKGLPLQACHVGSMFGYFFTKDPVSNYQDALKSNLALFSKFHKNMLENGIYLAPSQFETGFICSKMDDKVIDITLEAVRESFKRI</sequence>
<accession>A7H3N1</accession>
<proteinExistence type="inferred from homology"/>
<evidence type="ECO:0000255" key="1">
    <source>
        <dbReference type="HAMAP-Rule" id="MF_00375"/>
    </source>
</evidence>
<keyword id="KW-0963">Cytoplasm</keyword>
<keyword id="KW-0413">Isomerase</keyword>
<keyword id="KW-0627">Porphyrin biosynthesis</keyword>
<keyword id="KW-0663">Pyridoxal phosphate</keyword>